<keyword id="KW-0963">Cytoplasm</keyword>
<keyword id="KW-0967">Endosome</keyword>
<keyword id="KW-0472">Membrane</keyword>
<keyword id="KW-0653">Protein transport</keyword>
<keyword id="KW-1185">Reference proteome</keyword>
<keyword id="KW-0813">Transport</keyword>
<comment type="function">
    <text evidence="1">Acts as a component of the retromer cargo-selective complex (CSC). The CSC is believed to be the core functional component of retromer or respective retromer complex variants acting to prevent missorting of selected transmembrane cargo proteins into the lysosomal degradation pathway. Retromer mediates retrograde transport of cargo proteins from endosomes to the trans-Golgi network (TGN) (By similarity).</text>
</comment>
<comment type="subunit">
    <text evidence="1">Component of the heterotrimeric retromer cargo-selective complex (CSC) which is believed to associate with variable sorting nexins to form functionally distinct retromer complex variants (By similarity).</text>
</comment>
<comment type="subcellular location">
    <subcellularLocation>
        <location>Cytoplasm</location>
    </subcellularLocation>
    <subcellularLocation>
        <location>Endosome membrane</location>
        <topology>Peripheral membrane protein</topology>
    </subcellularLocation>
    <subcellularLocation>
        <location evidence="1">Early endosome</location>
    </subcellularLocation>
    <text evidence="1">Localizes to tubular profiles adjacent to endosomes (By similarity).</text>
</comment>
<comment type="similarity">
    <text evidence="3">Belongs to the VPS26 family.</text>
</comment>
<name>V26BA_XENLA</name>
<proteinExistence type="evidence at transcript level"/>
<gene>
    <name type="primary">vps26b-a</name>
</gene>
<accession>Q68F29</accession>
<protein>
    <recommendedName>
        <fullName>Vacuolar protein sorting-associated protein 26B-A</fullName>
    </recommendedName>
    <alternativeName>
        <fullName>Vesicle protein sorting 26B-A</fullName>
    </alternativeName>
</protein>
<evidence type="ECO:0000250" key="1">
    <source>
        <dbReference type="UniProtKB" id="O75436"/>
    </source>
</evidence>
<evidence type="ECO:0000256" key="2">
    <source>
        <dbReference type="SAM" id="MobiDB-lite"/>
    </source>
</evidence>
<evidence type="ECO:0000305" key="3"/>
<organism>
    <name type="scientific">Xenopus laevis</name>
    <name type="common">African clawed frog</name>
    <dbReference type="NCBI Taxonomy" id="8355"/>
    <lineage>
        <taxon>Eukaryota</taxon>
        <taxon>Metazoa</taxon>
        <taxon>Chordata</taxon>
        <taxon>Craniata</taxon>
        <taxon>Vertebrata</taxon>
        <taxon>Euteleostomi</taxon>
        <taxon>Amphibia</taxon>
        <taxon>Batrachia</taxon>
        <taxon>Anura</taxon>
        <taxon>Pipoidea</taxon>
        <taxon>Pipidae</taxon>
        <taxon>Xenopodinae</taxon>
        <taxon>Xenopus</taxon>
        <taxon>Xenopus</taxon>
    </lineage>
</organism>
<reference key="1">
    <citation type="submission" date="2004-08" db="EMBL/GenBank/DDBJ databases">
        <authorList>
            <consortium name="NIH - Xenopus Gene Collection (XGC) project"/>
        </authorList>
    </citation>
    <scope>NUCLEOTIDE SEQUENCE [LARGE SCALE MRNA]</scope>
    <source>
        <tissue>Kidney</tissue>
    </source>
</reference>
<dbReference type="EMBL" id="BC080016">
    <property type="protein sequence ID" value="AAH80016.1"/>
    <property type="molecule type" value="mRNA"/>
</dbReference>
<dbReference type="RefSeq" id="NP_001087500.1">
    <property type="nucleotide sequence ID" value="NM_001094031.1"/>
</dbReference>
<dbReference type="SMR" id="Q68F29"/>
<dbReference type="DNASU" id="447324"/>
<dbReference type="GeneID" id="447324"/>
<dbReference type="KEGG" id="xla:447324"/>
<dbReference type="AGR" id="Xenbase:XB-GENE-6254010"/>
<dbReference type="CTD" id="447324"/>
<dbReference type="Xenbase" id="XB-GENE-6254010">
    <property type="gene designation" value="vps26b.L"/>
</dbReference>
<dbReference type="OMA" id="LVRINIK"/>
<dbReference type="OrthoDB" id="3821113at2759"/>
<dbReference type="Proteomes" id="UP000186698">
    <property type="component" value="Chromosome 7L"/>
</dbReference>
<dbReference type="Bgee" id="447324">
    <property type="expression patterns" value="Expressed in egg cell and 19 other cell types or tissues"/>
</dbReference>
<dbReference type="GO" id="GO:0005829">
    <property type="term" value="C:cytosol"/>
    <property type="evidence" value="ECO:0007669"/>
    <property type="project" value="GOC"/>
</dbReference>
<dbReference type="GO" id="GO:0005769">
    <property type="term" value="C:early endosome"/>
    <property type="evidence" value="ECO:0007669"/>
    <property type="project" value="UniProtKB-SubCell"/>
</dbReference>
<dbReference type="GO" id="GO:0005768">
    <property type="term" value="C:endosome"/>
    <property type="evidence" value="ECO:0000318"/>
    <property type="project" value="GO_Central"/>
</dbReference>
<dbReference type="GO" id="GO:0010008">
    <property type="term" value="C:endosome membrane"/>
    <property type="evidence" value="ECO:0007669"/>
    <property type="project" value="UniProtKB-SubCell"/>
</dbReference>
<dbReference type="GO" id="GO:0030904">
    <property type="term" value="C:retromer complex"/>
    <property type="evidence" value="ECO:0000318"/>
    <property type="project" value="GO_Central"/>
</dbReference>
<dbReference type="GO" id="GO:0006886">
    <property type="term" value="P:intracellular protein transport"/>
    <property type="evidence" value="ECO:0000318"/>
    <property type="project" value="GO_Central"/>
</dbReference>
<dbReference type="GO" id="GO:0042147">
    <property type="term" value="P:retrograde transport, endosome to Golgi"/>
    <property type="evidence" value="ECO:0000318"/>
    <property type="project" value="GO_Central"/>
</dbReference>
<dbReference type="FunFam" id="2.60.40.640:FF:000001">
    <property type="entry name" value="Vacuolar protein sorting-associated protein 26A"/>
    <property type="match status" value="1"/>
</dbReference>
<dbReference type="FunFam" id="2.60.40.640:FF:000002">
    <property type="entry name" value="Vacuolar protein sorting-associated protein 26A"/>
    <property type="match status" value="1"/>
</dbReference>
<dbReference type="Gene3D" id="2.60.40.640">
    <property type="match status" value="2"/>
</dbReference>
<dbReference type="InterPro" id="IPR014752">
    <property type="entry name" value="Arrestin-like_C"/>
</dbReference>
<dbReference type="InterPro" id="IPR028934">
    <property type="entry name" value="Vps26-related"/>
</dbReference>
<dbReference type="PANTHER" id="PTHR12233">
    <property type="entry name" value="VACUOLAR PROTEIN SORTING 26 RELATED"/>
    <property type="match status" value="1"/>
</dbReference>
<dbReference type="Pfam" id="PF03643">
    <property type="entry name" value="Vps26"/>
    <property type="match status" value="1"/>
</dbReference>
<sequence length="337" mass="39188">MSFFGFGPAAELDIALTDGESRRRAEHKTEDGKKEKYFLFYDGETVSGRVTVNLRNPGKRLEHQGLKIEFIGQIELYYDRGNHHEFVSLVKDLARPGEISQSQSFDFEFTHVEKPYESYTGQNVKLRYFLRATLSRRLNDVVKEMDIVVHTLSTYPELNSSIKMEVGIEDCLHIEFEYNKSKYHLKDVIVGKIYFLLVRIKIKHMEIDIIKRETTGTGPNVYHENDTIAKYEIMDGAPVRGESIPIRLFLAGYELTPTMRDINKKFSVRYYLNLVLIDEEERRYFKQQEIVLWRKGDIVRKSMSHQAAIASQRFEGTSHPETRPQHSGAAAVEQEHE</sequence>
<feature type="chain" id="PRO_0000247094" description="Vacuolar protein sorting-associated protein 26B-A">
    <location>
        <begin position="1"/>
        <end position="337"/>
    </location>
</feature>
<feature type="region of interest" description="Disordered" evidence="2">
    <location>
        <begin position="313"/>
        <end position="337"/>
    </location>
</feature>